<organism>
    <name type="scientific">Mus musculus</name>
    <name type="common">Mouse</name>
    <dbReference type="NCBI Taxonomy" id="10090"/>
    <lineage>
        <taxon>Eukaryota</taxon>
        <taxon>Metazoa</taxon>
        <taxon>Chordata</taxon>
        <taxon>Craniata</taxon>
        <taxon>Vertebrata</taxon>
        <taxon>Euteleostomi</taxon>
        <taxon>Mammalia</taxon>
        <taxon>Eutheria</taxon>
        <taxon>Euarchontoglires</taxon>
        <taxon>Glires</taxon>
        <taxon>Rodentia</taxon>
        <taxon>Myomorpha</taxon>
        <taxon>Muroidea</taxon>
        <taxon>Muridae</taxon>
        <taxon>Murinae</taxon>
        <taxon>Mus</taxon>
        <taxon>Mus</taxon>
    </lineage>
</organism>
<gene>
    <name type="primary">Ppp1r15b</name>
</gene>
<accession>Q8BFW3</accession>
<accession>Q3TC78</accession>
<accession>Q8C390</accession>
<feature type="chain" id="PRO_0000320521" description="Protein phosphatase 1 regulatory subunit 15B">
    <location>
        <begin position="1"/>
        <end position="697"/>
    </location>
</feature>
<feature type="region of interest" description="Disordered" evidence="2">
    <location>
        <begin position="328"/>
        <end position="354"/>
    </location>
</feature>
<feature type="region of interest" description="Disordered" evidence="2">
    <location>
        <begin position="417"/>
        <end position="456"/>
    </location>
</feature>
<feature type="region of interest" description="Disordered" evidence="2">
    <location>
        <begin position="486"/>
        <end position="531"/>
    </location>
</feature>
<feature type="compositionally biased region" description="Basic and acidic residues" evidence="2">
    <location>
        <begin position="345"/>
        <end position="354"/>
    </location>
</feature>
<feature type="compositionally biased region" description="Acidic residues" evidence="2">
    <location>
        <begin position="423"/>
        <end position="442"/>
    </location>
</feature>
<feature type="compositionally biased region" description="Acidic residues" evidence="2">
    <location>
        <begin position="522"/>
        <end position="531"/>
    </location>
</feature>
<feature type="modified residue" description="Phosphoserine" evidence="1">
    <location>
        <position position="197"/>
    </location>
</feature>
<feature type="modified residue" description="Phosphoserine" evidence="1">
    <location>
        <position position="199"/>
    </location>
</feature>
<feature type="modified residue" description="Phosphoserine" evidence="1">
    <location>
        <position position="492"/>
    </location>
</feature>
<feature type="splice variant" id="VSP_031652" description="In isoform 2." evidence="6">
    <location>
        <begin position="336"/>
        <end position="353"/>
    </location>
</feature>
<name>PR15B_MOUSE</name>
<evidence type="ECO:0000250" key="1">
    <source>
        <dbReference type="UniProtKB" id="Q5SWA1"/>
    </source>
</evidence>
<evidence type="ECO:0000256" key="2">
    <source>
        <dbReference type="SAM" id="MobiDB-lite"/>
    </source>
</evidence>
<evidence type="ECO:0000269" key="3">
    <source>
    </source>
</evidence>
<evidence type="ECO:0000269" key="4">
    <source>
    </source>
</evidence>
<evidence type="ECO:0000269" key="5">
    <source>
    </source>
</evidence>
<evidence type="ECO:0000303" key="6">
    <source>
    </source>
</evidence>
<evidence type="ECO:0000305" key="7"/>
<reference key="1">
    <citation type="journal article" date="2005" name="Science">
        <title>The transcriptional landscape of the mammalian genome.</title>
        <authorList>
            <person name="Carninci P."/>
            <person name="Kasukawa T."/>
            <person name="Katayama S."/>
            <person name="Gough J."/>
            <person name="Frith M.C."/>
            <person name="Maeda N."/>
            <person name="Oyama R."/>
            <person name="Ravasi T."/>
            <person name="Lenhard B."/>
            <person name="Wells C."/>
            <person name="Kodzius R."/>
            <person name="Shimokawa K."/>
            <person name="Bajic V.B."/>
            <person name="Brenner S.E."/>
            <person name="Batalov S."/>
            <person name="Forrest A.R."/>
            <person name="Zavolan M."/>
            <person name="Davis M.J."/>
            <person name="Wilming L.G."/>
            <person name="Aidinis V."/>
            <person name="Allen J.E."/>
            <person name="Ambesi-Impiombato A."/>
            <person name="Apweiler R."/>
            <person name="Aturaliya R.N."/>
            <person name="Bailey T.L."/>
            <person name="Bansal M."/>
            <person name="Baxter L."/>
            <person name="Beisel K.W."/>
            <person name="Bersano T."/>
            <person name="Bono H."/>
            <person name="Chalk A.M."/>
            <person name="Chiu K.P."/>
            <person name="Choudhary V."/>
            <person name="Christoffels A."/>
            <person name="Clutterbuck D.R."/>
            <person name="Crowe M.L."/>
            <person name="Dalla E."/>
            <person name="Dalrymple B.P."/>
            <person name="de Bono B."/>
            <person name="Della Gatta G."/>
            <person name="di Bernardo D."/>
            <person name="Down T."/>
            <person name="Engstrom P."/>
            <person name="Fagiolini M."/>
            <person name="Faulkner G."/>
            <person name="Fletcher C.F."/>
            <person name="Fukushima T."/>
            <person name="Furuno M."/>
            <person name="Futaki S."/>
            <person name="Gariboldi M."/>
            <person name="Georgii-Hemming P."/>
            <person name="Gingeras T.R."/>
            <person name="Gojobori T."/>
            <person name="Green R.E."/>
            <person name="Gustincich S."/>
            <person name="Harbers M."/>
            <person name="Hayashi Y."/>
            <person name="Hensch T.K."/>
            <person name="Hirokawa N."/>
            <person name="Hill D."/>
            <person name="Huminiecki L."/>
            <person name="Iacono M."/>
            <person name="Ikeo K."/>
            <person name="Iwama A."/>
            <person name="Ishikawa T."/>
            <person name="Jakt M."/>
            <person name="Kanapin A."/>
            <person name="Katoh M."/>
            <person name="Kawasawa Y."/>
            <person name="Kelso J."/>
            <person name="Kitamura H."/>
            <person name="Kitano H."/>
            <person name="Kollias G."/>
            <person name="Krishnan S.P."/>
            <person name="Kruger A."/>
            <person name="Kummerfeld S.K."/>
            <person name="Kurochkin I.V."/>
            <person name="Lareau L.F."/>
            <person name="Lazarevic D."/>
            <person name="Lipovich L."/>
            <person name="Liu J."/>
            <person name="Liuni S."/>
            <person name="McWilliam S."/>
            <person name="Madan Babu M."/>
            <person name="Madera M."/>
            <person name="Marchionni L."/>
            <person name="Matsuda H."/>
            <person name="Matsuzawa S."/>
            <person name="Miki H."/>
            <person name="Mignone F."/>
            <person name="Miyake S."/>
            <person name="Morris K."/>
            <person name="Mottagui-Tabar S."/>
            <person name="Mulder N."/>
            <person name="Nakano N."/>
            <person name="Nakauchi H."/>
            <person name="Ng P."/>
            <person name="Nilsson R."/>
            <person name="Nishiguchi S."/>
            <person name="Nishikawa S."/>
            <person name="Nori F."/>
            <person name="Ohara O."/>
            <person name="Okazaki Y."/>
            <person name="Orlando V."/>
            <person name="Pang K.C."/>
            <person name="Pavan W.J."/>
            <person name="Pavesi G."/>
            <person name="Pesole G."/>
            <person name="Petrovsky N."/>
            <person name="Piazza S."/>
            <person name="Reed J."/>
            <person name="Reid J.F."/>
            <person name="Ring B.Z."/>
            <person name="Ringwald M."/>
            <person name="Rost B."/>
            <person name="Ruan Y."/>
            <person name="Salzberg S.L."/>
            <person name="Sandelin A."/>
            <person name="Schneider C."/>
            <person name="Schoenbach C."/>
            <person name="Sekiguchi K."/>
            <person name="Semple C.A."/>
            <person name="Seno S."/>
            <person name="Sessa L."/>
            <person name="Sheng Y."/>
            <person name="Shibata Y."/>
            <person name="Shimada H."/>
            <person name="Shimada K."/>
            <person name="Silva D."/>
            <person name="Sinclair B."/>
            <person name="Sperling S."/>
            <person name="Stupka E."/>
            <person name="Sugiura K."/>
            <person name="Sultana R."/>
            <person name="Takenaka Y."/>
            <person name="Taki K."/>
            <person name="Tammoja K."/>
            <person name="Tan S.L."/>
            <person name="Tang S."/>
            <person name="Taylor M.S."/>
            <person name="Tegner J."/>
            <person name="Teichmann S.A."/>
            <person name="Ueda H.R."/>
            <person name="van Nimwegen E."/>
            <person name="Verardo R."/>
            <person name="Wei C.L."/>
            <person name="Yagi K."/>
            <person name="Yamanishi H."/>
            <person name="Zabarovsky E."/>
            <person name="Zhu S."/>
            <person name="Zimmer A."/>
            <person name="Hide W."/>
            <person name="Bult C."/>
            <person name="Grimmond S.M."/>
            <person name="Teasdale R.D."/>
            <person name="Liu E.T."/>
            <person name="Brusic V."/>
            <person name="Quackenbush J."/>
            <person name="Wahlestedt C."/>
            <person name="Mattick J.S."/>
            <person name="Hume D.A."/>
            <person name="Kai C."/>
            <person name="Sasaki D."/>
            <person name="Tomaru Y."/>
            <person name="Fukuda S."/>
            <person name="Kanamori-Katayama M."/>
            <person name="Suzuki M."/>
            <person name="Aoki J."/>
            <person name="Arakawa T."/>
            <person name="Iida J."/>
            <person name="Imamura K."/>
            <person name="Itoh M."/>
            <person name="Kato T."/>
            <person name="Kawaji H."/>
            <person name="Kawagashira N."/>
            <person name="Kawashima T."/>
            <person name="Kojima M."/>
            <person name="Kondo S."/>
            <person name="Konno H."/>
            <person name="Nakano K."/>
            <person name="Ninomiya N."/>
            <person name="Nishio T."/>
            <person name="Okada M."/>
            <person name="Plessy C."/>
            <person name="Shibata K."/>
            <person name="Shiraki T."/>
            <person name="Suzuki S."/>
            <person name="Tagami M."/>
            <person name="Waki K."/>
            <person name="Watahiki A."/>
            <person name="Okamura-Oho Y."/>
            <person name="Suzuki H."/>
            <person name="Kawai J."/>
            <person name="Hayashizaki Y."/>
        </authorList>
    </citation>
    <scope>NUCLEOTIDE SEQUENCE [LARGE SCALE MRNA] (ISOFORMS 1 AND 2)</scope>
    <source>
        <strain>C57BL/6J</strain>
        <strain>NOD</strain>
        <tissue>Cerebellum</tissue>
        <tissue>Head</tissue>
        <tissue>Liver</tissue>
        <tissue>Lung</tissue>
        <tissue>Placenta</tissue>
        <tissue>Spinal cord</tissue>
    </source>
</reference>
<reference key="2">
    <citation type="journal article" date="2003" name="J. Cell Biol.">
        <title>Inhibition of a constitutive translation initiation factor 2alpha phosphatase, CReP, promotes survival of stressed cells.</title>
        <authorList>
            <person name="Jousse C."/>
            <person name="Oyadomari S."/>
            <person name="Novoa I."/>
            <person name="Lu P."/>
            <person name="Zhang Y."/>
            <person name="Harding H.P."/>
            <person name="Ron D."/>
        </authorList>
    </citation>
    <scope>FUNCTION</scope>
    <scope>INTERACTION WITH PP1</scope>
</reference>
<reference key="3">
    <citation type="journal article" date="2006" name="J. Biol. Chem.">
        <title>Nck in a complex containing the catalytic subunit of protein phosphatase 1 regulates eukaryotic initiation factor 2alpha signaling and cell survival to endoplasmic reticulum stress.</title>
        <authorList>
            <person name="Latreille M."/>
            <person name="Larose L."/>
        </authorList>
    </citation>
    <scope>IDENTIFICATION IN COMPLEX WITH PP1 AND NCK1</scope>
</reference>
<reference key="4">
    <citation type="journal article" date="2009" name="Proc. Natl. Acad. Sci. U.S.A.">
        <title>Ppp1r15 gene knockout reveals an essential role for translation initiation factor 2 alpha (eIF2alpha) dephosphorylation in mammalian development.</title>
        <authorList>
            <person name="Harding H.P."/>
            <person name="Zhang Y."/>
            <person name="Scheuner D."/>
            <person name="Chen J.J."/>
            <person name="Kaufman R.J."/>
            <person name="Ron D."/>
        </authorList>
    </citation>
    <scope>FUNCTION</scope>
    <scope>DISRUPTION PHENOTYPE</scope>
</reference>
<dbReference type="EMBL" id="AK049028">
    <property type="protein sequence ID" value="BAC33517.1"/>
    <property type="molecule type" value="mRNA"/>
</dbReference>
<dbReference type="EMBL" id="AK082957">
    <property type="protein sequence ID" value="BAC38708.1"/>
    <property type="molecule type" value="mRNA"/>
</dbReference>
<dbReference type="EMBL" id="AK086606">
    <property type="protein sequence ID" value="BAC39701.1"/>
    <property type="molecule type" value="mRNA"/>
</dbReference>
<dbReference type="EMBL" id="AK144678">
    <property type="protein sequence ID" value="BAE26007.1"/>
    <property type="molecule type" value="mRNA"/>
</dbReference>
<dbReference type="EMBL" id="AK146089">
    <property type="protein sequence ID" value="BAE26892.1"/>
    <property type="molecule type" value="mRNA"/>
</dbReference>
<dbReference type="EMBL" id="AK167565">
    <property type="protein sequence ID" value="BAE39628.1"/>
    <property type="molecule type" value="mRNA"/>
</dbReference>
<dbReference type="EMBL" id="AK170862">
    <property type="protein sequence ID" value="BAE42079.1"/>
    <property type="molecule type" value="mRNA"/>
</dbReference>
<dbReference type="CCDS" id="CCDS15291.1">
    <molecule id="Q8BFW3-1"/>
</dbReference>
<dbReference type="RefSeq" id="NP_598580.1">
    <molecule id="Q8BFW3-1"/>
    <property type="nucleotide sequence ID" value="NM_133819.3"/>
</dbReference>
<dbReference type="SMR" id="Q8BFW3"/>
<dbReference type="BioGRID" id="224491">
    <property type="interactions" value="4"/>
</dbReference>
<dbReference type="FunCoup" id="Q8BFW3">
    <property type="interactions" value="1021"/>
</dbReference>
<dbReference type="STRING" id="10090.ENSMUSP00000057062"/>
<dbReference type="iPTMnet" id="Q8BFW3"/>
<dbReference type="PhosphoSitePlus" id="Q8BFW3"/>
<dbReference type="PaxDb" id="10090-ENSMUSP00000057062"/>
<dbReference type="PeptideAtlas" id="Q8BFW3"/>
<dbReference type="ProteomicsDB" id="291850">
    <molecule id="Q8BFW3-1"/>
</dbReference>
<dbReference type="ProteomicsDB" id="291851">
    <molecule id="Q8BFW3-2"/>
</dbReference>
<dbReference type="Antibodypedia" id="34557">
    <property type="antibodies" value="111 antibodies from 25 providers"/>
</dbReference>
<dbReference type="Ensembl" id="ENSMUST00000052529.4">
    <molecule id="Q8BFW3-1"/>
    <property type="protein sequence ID" value="ENSMUSP00000057062.4"/>
    <property type="gene ID" value="ENSMUSG00000046062.6"/>
</dbReference>
<dbReference type="GeneID" id="108954"/>
<dbReference type="KEGG" id="mmu:108954"/>
<dbReference type="UCSC" id="uc007cpt.2">
    <molecule id="Q8BFW3-1"/>
    <property type="organism name" value="mouse"/>
</dbReference>
<dbReference type="AGR" id="MGI:2444211"/>
<dbReference type="CTD" id="84919"/>
<dbReference type="MGI" id="MGI:2444211">
    <property type="gene designation" value="Ppp1r15b"/>
</dbReference>
<dbReference type="VEuPathDB" id="HostDB:ENSMUSG00000046062"/>
<dbReference type="eggNOG" id="ENOG502QV9K">
    <property type="taxonomic scope" value="Eukaryota"/>
</dbReference>
<dbReference type="GeneTree" id="ENSGT00940000154404"/>
<dbReference type="HOGENOM" id="CLU_014797_0_0_1"/>
<dbReference type="InParanoid" id="Q8BFW3"/>
<dbReference type="OMA" id="GDSPTQC"/>
<dbReference type="OrthoDB" id="5976067at2759"/>
<dbReference type="PhylomeDB" id="Q8BFW3"/>
<dbReference type="TreeFam" id="TF105548"/>
<dbReference type="BioGRID-ORCS" id="108954">
    <property type="hits" value="25 hits in 75 CRISPR screens"/>
</dbReference>
<dbReference type="ChiTaRS" id="Ppp1r15b">
    <property type="organism name" value="mouse"/>
</dbReference>
<dbReference type="PRO" id="PR:Q8BFW3"/>
<dbReference type="Proteomes" id="UP000000589">
    <property type="component" value="Chromosome 1"/>
</dbReference>
<dbReference type="RNAct" id="Q8BFW3">
    <property type="molecule type" value="protein"/>
</dbReference>
<dbReference type="Bgee" id="ENSMUSG00000046062">
    <property type="expression patterns" value="Expressed in lacrimal gland and 259 other cell types or tissues"/>
</dbReference>
<dbReference type="GO" id="GO:0000164">
    <property type="term" value="C:protein phosphatase type 1 complex"/>
    <property type="evidence" value="ECO:0000314"/>
    <property type="project" value="ParkinsonsUK-UCL"/>
</dbReference>
<dbReference type="GO" id="GO:0019888">
    <property type="term" value="F:protein phosphatase regulator activity"/>
    <property type="evidence" value="ECO:0000314"/>
    <property type="project" value="MGI"/>
</dbReference>
<dbReference type="GO" id="GO:0006983">
    <property type="term" value="P:ER overload response"/>
    <property type="evidence" value="ECO:0000314"/>
    <property type="project" value="MGI"/>
</dbReference>
<dbReference type="GO" id="GO:0006446">
    <property type="term" value="P:regulation of translational initiation"/>
    <property type="evidence" value="ECO:0000305"/>
    <property type="project" value="MGI"/>
</dbReference>
<dbReference type="GO" id="GO:0034976">
    <property type="term" value="P:response to endoplasmic reticulum stress"/>
    <property type="evidence" value="ECO:0000315"/>
    <property type="project" value="MGI"/>
</dbReference>
<dbReference type="GO" id="GO:0042542">
    <property type="term" value="P:response to hydrogen peroxide"/>
    <property type="evidence" value="ECO:0000315"/>
    <property type="project" value="MGI"/>
</dbReference>
<dbReference type="GO" id="GO:0006979">
    <property type="term" value="P:response to oxidative stress"/>
    <property type="evidence" value="ECO:0000314"/>
    <property type="project" value="MGI"/>
</dbReference>
<dbReference type="InterPro" id="IPR051254">
    <property type="entry name" value="PPP1R15"/>
</dbReference>
<dbReference type="InterPro" id="IPR019523">
    <property type="entry name" value="Prot_Pase1_reg-su15A/B_C"/>
</dbReference>
<dbReference type="InterPro" id="IPR019512">
    <property type="entry name" value="Prot_Pase1_reg-su15B_N"/>
</dbReference>
<dbReference type="PANTHER" id="PTHR16489">
    <property type="entry name" value="GH11727P"/>
    <property type="match status" value="1"/>
</dbReference>
<dbReference type="PANTHER" id="PTHR16489:SF11">
    <property type="entry name" value="PROTEIN PHOSPHATASE 1 REGULATORY SUBUNIT 15B"/>
    <property type="match status" value="1"/>
</dbReference>
<dbReference type="Pfam" id="PF10472">
    <property type="entry name" value="CReP_N"/>
    <property type="match status" value="1"/>
</dbReference>
<dbReference type="Pfam" id="PF10488">
    <property type="entry name" value="PP1c_bdg"/>
    <property type="match status" value="1"/>
</dbReference>
<protein>
    <recommendedName>
        <fullName>Protein phosphatase 1 regulatory subunit 15B</fullName>
    </recommendedName>
    <alternativeName>
        <fullName>Constitutive repressor of eIF2alpha phosphorylation</fullName>
        <shortName>CReP</shortName>
    </alternativeName>
</protein>
<proteinExistence type="evidence at protein level"/>
<comment type="function">
    <text evidence="3 5">Maintains low levels of EIF2S1 phosphorylation in unstressed cells by promoting its dephosphorylation by PP1.</text>
</comment>
<comment type="subunit">
    <text evidence="3 4">Interacts with PP1. Part of a complex containing PPP1R15B, PP1 and NCK1/2.</text>
</comment>
<comment type="alternative products">
    <event type="alternative splicing"/>
    <isoform>
        <id>Q8BFW3-1</id>
        <name>1</name>
        <sequence type="displayed"/>
    </isoform>
    <isoform>
        <id>Q8BFW3-2</id>
        <name>2</name>
        <sequence type="described" ref="VSP_031652"/>
    </isoform>
</comment>
<comment type="disruption phenotype">
    <text evidence="5">Mice are born at the expected Mendelian ratio, but exhibit severe growth retardation and impaired erythropoiesis. None survive the first day of postnatal life. PPP1R15A-PPP1R15B double-knockout embryos do not develop past the preimplantation period.</text>
</comment>
<comment type="similarity">
    <text evidence="7">Belongs to the PPP1R15 family.</text>
</comment>
<sequence>METGTHRARKRPGPRLGSWFRLPFLRRSHACSSEFPPPSSRQNPGNSALPERRTRYWTKLLSQLLALLPSLFQKLLLWSQLFGGLIPTRWLDFAASYSALRALRGREESAAPTVQKSLSSLRLDSSEDLVVSSLDWLEEGLQWQCSSSDLELKLKAQERALDSAAPTFLLEQQLWGVELLPSSLQAGLVSHRELDSSSSGPLSVQSLGNFKVVSYLLNPSYLDYLPQLGLRCQSSAGGGQFVGFRTLTPESCYLSEDGCHPQPLRAEMSATAWRRCPPLSTEGLPEIHHLRMKRLEFLQANKGQELPTPDQDNGYHSLEEEHNLLRMDPQHCTDNPAQAVSPAADRPEPTEKKPELVIQEVSQSPQGSSLFCELPVEKECEEDHTNATDLSDRGESLPVSTRPVCSNKLIDYILGGAPSDLEASSDSESEDWGEEPEDDGFDSDGSLSESDVEQDSEGLHLWNSFHSVDPYNPQNFTATIQTAARIAPRDPSDSGTSWSGSCGVGSCQEGPLPETPDHSSGEEDDWEPSADEAENLKLWNSFCHSEDPYNLLNFKAPFQPSGKNWKGRQDSKASSEATVAFSGHHTLLSCKAQLLESQEDNCPGCGLGEALAGERYTHIKRKKVTFLEEVTEYYISGDEDRKGPWEEFARDGCRFQKRIQETEVAIGYCLAFEHREKMFNRLRIESKDLLLYSNVKK</sequence>
<keyword id="KW-0025">Alternative splicing</keyword>
<keyword id="KW-0597">Phosphoprotein</keyword>
<keyword id="KW-1185">Reference proteome</keyword>
<keyword id="KW-0810">Translation regulation</keyword>